<name>Y1708_SYNS9</name>
<evidence type="ECO:0000255" key="1">
    <source>
        <dbReference type="HAMAP-Rule" id="MF_00632"/>
    </source>
</evidence>
<reference key="1">
    <citation type="submission" date="2005-08" db="EMBL/GenBank/DDBJ databases">
        <title>Complete sequence of Synechococcus sp. CC9902.</title>
        <authorList>
            <person name="Copeland A."/>
            <person name="Lucas S."/>
            <person name="Lapidus A."/>
            <person name="Barry K."/>
            <person name="Detter J.C."/>
            <person name="Glavina T."/>
            <person name="Hammon N."/>
            <person name="Israni S."/>
            <person name="Pitluck S."/>
            <person name="Martinez M."/>
            <person name="Schmutz J."/>
            <person name="Larimer F."/>
            <person name="Land M."/>
            <person name="Kyrpides N."/>
            <person name="Ivanova N."/>
            <person name="Richardson P."/>
        </authorList>
    </citation>
    <scope>NUCLEOTIDE SEQUENCE [LARGE SCALE GENOMIC DNA]</scope>
    <source>
        <strain>CC9902</strain>
    </source>
</reference>
<gene>
    <name type="ordered locus">Syncc9902_1708</name>
</gene>
<sequence>MASTSSFDVVSDFDRQELVNTLDQVRRDVSTRYDLKDSKTEIVLEETEMVITTASDMTLQAVEDVLRAKATKRNLSLKIFDFQTPESVGGNRIQQVVKLRKGLSQEIAKKLSKIVRDELKKVTVAIQGESVRITGKSKDDLQAAIQLVKSKEDELDVPLQFENYR</sequence>
<organism>
    <name type="scientific">Synechococcus sp. (strain CC9902)</name>
    <dbReference type="NCBI Taxonomy" id="316279"/>
    <lineage>
        <taxon>Bacteria</taxon>
        <taxon>Bacillati</taxon>
        <taxon>Cyanobacteriota</taxon>
        <taxon>Cyanophyceae</taxon>
        <taxon>Synechococcales</taxon>
        <taxon>Synechococcaceae</taxon>
        <taxon>Synechococcus</taxon>
    </lineage>
</organism>
<feature type="chain" id="PRO_1000147328" description="Nucleotide-binding protein Syncc9902_1708">
    <location>
        <begin position="1"/>
        <end position="165"/>
    </location>
</feature>
<dbReference type="EMBL" id="CP000097">
    <property type="protein sequence ID" value="ABB26666.1"/>
    <property type="molecule type" value="Genomic_DNA"/>
</dbReference>
<dbReference type="RefSeq" id="WP_011360476.1">
    <property type="nucleotide sequence ID" value="NC_007513.1"/>
</dbReference>
<dbReference type="SMR" id="Q3AWN7"/>
<dbReference type="KEGG" id="sye:Syncc9902_1708"/>
<dbReference type="eggNOG" id="COG1666">
    <property type="taxonomic scope" value="Bacteria"/>
</dbReference>
<dbReference type="HOGENOM" id="CLU_099839_0_0_3"/>
<dbReference type="OrthoDB" id="9801447at2"/>
<dbReference type="Proteomes" id="UP000002712">
    <property type="component" value="Chromosome"/>
</dbReference>
<dbReference type="GO" id="GO:0005829">
    <property type="term" value="C:cytosol"/>
    <property type="evidence" value="ECO:0007669"/>
    <property type="project" value="TreeGrafter"/>
</dbReference>
<dbReference type="GO" id="GO:0000166">
    <property type="term" value="F:nucleotide binding"/>
    <property type="evidence" value="ECO:0007669"/>
    <property type="project" value="TreeGrafter"/>
</dbReference>
<dbReference type="CDD" id="cd11740">
    <property type="entry name" value="YajQ_like"/>
    <property type="match status" value="1"/>
</dbReference>
<dbReference type="Gene3D" id="3.30.70.860">
    <property type="match status" value="1"/>
</dbReference>
<dbReference type="Gene3D" id="3.30.70.990">
    <property type="entry name" value="YajQ-like, domain 2"/>
    <property type="match status" value="1"/>
</dbReference>
<dbReference type="HAMAP" id="MF_00632">
    <property type="entry name" value="YajQ"/>
    <property type="match status" value="1"/>
</dbReference>
<dbReference type="InterPro" id="IPR007551">
    <property type="entry name" value="DUF520"/>
</dbReference>
<dbReference type="InterPro" id="IPR035571">
    <property type="entry name" value="UPF0234-like_C"/>
</dbReference>
<dbReference type="InterPro" id="IPR035570">
    <property type="entry name" value="UPF0234_N"/>
</dbReference>
<dbReference type="InterPro" id="IPR036183">
    <property type="entry name" value="YajQ-like_sf"/>
</dbReference>
<dbReference type="NCBIfam" id="NF003819">
    <property type="entry name" value="PRK05412.1"/>
    <property type="match status" value="1"/>
</dbReference>
<dbReference type="PANTHER" id="PTHR30476">
    <property type="entry name" value="UPF0234 PROTEIN YAJQ"/>
    <property type="match status" value="1"/>
</dbReference>
<dbReference type="PANTHER" id="PTHR30476:SF0">
    <property type="entry name" value="UPF0234 PROTEIN YAJQ"/>
    <property type="match status" value="1"/>
</dbReference>
<dbReference type="Pfam" id="PF04461">
    <property type="entry name" value="DUF520"/>
    <property type="match status" value="1"/>
</dbReference>
<dbReference type="SUPFAM" id="SSF89963">
    <property type="entry name" value="YajQ-like"/>
    <property type="match status" value="2"/>
</dbReference>
<comment type="function">
    <text evidence="1">Nucleotide-binding protein.</text>
</comment>
<comment type="similarity">
    <text evidence="1">Belongs to the YajQ family.</text>
</comment>
<accession>Q3AWN7</accession>
<keyword id="KW-0547">Nucleotide-binding</keyword>
<keyword id="KW-1185">Reference proteome</keyword>
<protein>
    <recommendedName>
        <fullName evidence="1">Nucleotide-binding protein Syncc9902_1708</fullName>
    </recommendedName>
</protein>
<proteinExistence type="inferred from homology"/>